<dbReference type="EMBL" id="AE016827">
    <property type="protein sequence ID" value="AAU38849.1"/>
    <property type="molecule type" value="Genomic_DNA"/>
</dbReference>
<dbReference type="RefSeq" id="WP_011201393.1">
    <property type="nucleotide sequence ID" value="NC_006300.1"/>
</dbReference>
<dbReference type="SMR" id="Q65QB1"/>
<dbReference type="STRING" id="221988.MS2242"/>
<dbReference type="KEGG" id="msu:MS2242"/>
<dbReference type="eggNOG" id="COG2137">
    <property type="taxonomic scope" value="Bacteria"/>
</dbReference>
<dbReference type="HOGENOM" id="CLU_066607_3_2_6"/>
<dbReference type="OrthoDB" id="7066780at2"/>
<dbReference type="Proteomes" id="UP000000607">
    <property type="component" value="Chromosome"/>
</dbReference>
<dbReference type="GO" id="GO:0005737">
    <property type="term" value="C:cytoplasm"/>
    <property type="evidence" value="ECO:0007669"/>
    <property type="project" value="UniProtKB-SubCell"/>
</dbReference>
<dbReference type="GO" id="GO:0006282">
    <property type="term" value="P:regulation of DNA repair"/>
    <property type="evidence" value="ECO:0007669"/>
    <property type="project" value="UniProtKB-UniRule"/>
</dbReference>
<dbReference type="Gene3D" id="1.10.10.10">
    <property type="entry name" value="Winged helix-like DNA-binding domain superfamily/Winged helix DNA-binding domain"/>
    <property type="match status" value="3"/>
</dbReference>
<dbReference type="HAMAP" id="MF_01114">
    <property type="entry name" value="RecX"/>
    <property type="match status" value="1"/>
</dbReference>
<dbReference type="InterPro" id="IPR053926">
    <property type="entry name" value="RecX_HTH_1st"/>
</dbReference>
<dbReference type="InterPro" id="IPR053924">
    <property type="entry name" value="RecX_HTH_2nd"/>
</dbReference>
<dbReference type="InterPro" id="IPR053925">
    <property type="entry name" value="RecX_HTH_3rd"/>
</dbReference>
<dbReference type="InterPro" id="IPR003783">
    <property type="entry name" value="Regulatory_RecX"/>
</dbReference>
<dbReference type="InterPro" id="IPR036388">
    <property type="entry name" value="WH-like_DNA-bd_sf"/>
</dbReference>
<dbReference type="NCBIfam" id="NF001057">
    <property type="entry name" value="PRK00117.3-3"/>
    <property type="match status" value="1"/>
</dbReference>
<dbReference type="PANTHER" id="PTHR33602">
    <property type="entry name" value="REGULATORY PROTEIN RECX FAMILY PROTEIN"/>
    <property type="match status" value="1"/>
</dbReference>
<dbReference type="PANTHER" id="PTHR33602:SF1">
    <property type="entry name" value="REGULATORY PROTEIN RECX FAMILY PROTEIN"/>
    <property type="match status" value="1"/>
</dbReference>
<dbReference type="Pfam" id="PF21982">
    <property type="entry name" value="RecX_HTH1"/>
    <property type="match status" value="1"/>
</dbReference>
<dbReference type="Pfam" id="PF02631">
    <property type="entry name" value="RecX_HTH2"/>
    <property type="match status" value="1"/>
</dbReference>
<dbReference type="Pfam" id="PF21981">
    <property type="entry name" value="RecX_HTH3"/>
    <property type="match status" value="1"/>
</dbReference>
<sequence>MTTLAFSYAVNLLSRREYSEFEIRCKMQEKAFSEQEIEDTLAQLQQKNWQSDKRFTENYLRARAQRGYGVNRIKQELRQLKGILPETVDEALMECDIDWSEIALNVLAKKFPDYRARQDAKNKQKIWRYMLSHGFFAEDFADFIGNGTEDEFY</sequence>
<protein>
    <recommendedName>
        <fullName evidence="1">Regulatory protein RecX</fullName>
    </recommendedName>
</protein>
<feature type="chain" id="PRO_1000065186" description="Regulatory protein RecX">
    <location>
        <begin position="1"/>
        <end position="153"/>
    </location>
</feature>
<evidence type="ECO:0000255" key="1">
    <source>
        <dbReference type="HAMAP-Rule" id="MF_01114"/>
    </source>
</evidence>
<gene>
    <name evidence="1" type="primary">recX</name>
    <name type="ordered locus">MS2242</name>
</gene>
<name>RECX_MANSM</name>
<reference key="1">
    <citation type="journal article" date="2004" name="Nat. Biotechnol.">
        <title>The genome sequence of the capnophilic rumen bacterium Mannheimia succiniciproducens.</title>
        <authorList>
            <person name="Hong S.H."/>
            <person name="Kim J.S."/>
            <person name="Lee S.Y."/>
            <person name="In Y.H."/>
            <person name="Choi S.S."/>
            <person name="Rih J.-K."/>
            <person name="Kim C.H."/>
            <person name="Jeong H."/>
            <person name="Hur C.G."/>
            <person name="Kim J.J."/>
        </authorList>
    </citation>
    <scope>NUCLEOTIDE SEQUENCE [LARGE SCALE GENOMIC DNA]</scope>
    <source>
        <strain>KCTC 0769BP / MBEL55E</strain>
    </source>
</reference>
<organism>
    <name type="scientific">Mannheimia succiniciproducens (strain KCTC 0769BP / MBEL55E)</name>
    <dbReference type="NCBI Taxonomy" id="221988"/>
    <lineage>
        <taxon>Bacteria</taxon>
        <taxon>Pseudomonadati</taxon>
        <taxon>Pseudomonadota</taxon>
        <taxon>Gammaproteobacteria</taxon>
        <taxon>Pasteurellales</taxon>
        <taxon>Pasteurellaceae</taxon>
        <taxon>Basfia</taxon>
    </lineage>
</organism>
<proteinExistence type="inferred from homology"/>
<comment type="function">
    <text evidence="1">Modulates RecA activity.</text>
</comment>
<comment type="subcellular location">
    <subcellularLocation>
        <location evidence="1">Cytoplasm</location>
    </subcellularLocation>
</comment>
<comment type="similarity">
    <text evidence="1">Belongs to the RecX family.</text>
</comment>
<keyword id="KW-0963">Cytoplasm</keyword>
<accession>Q65QB1</accession>